<accession>B7I989</accession>
<protein>
    <recommendedName>
        <fullName evidence="1">Nucleotide-binding protein AB57_3429</fullName>
    </recommendedName>
</protein>
<organism>
    <name type="scientific">Acinetobacter baumannii (strain AB0057)</name>
    <dbReference type="NCBI Taxonomy" id="480119"/>
    <lineage>
        <taxon>Bacteria</taxon>
        <taxon>Pseudomonadati</taxon>
        <taxon>Pseudomonadota</taxon>
        <taxon>Gammaproteobacteria</taxon>
        <taxon>Moraxellales</taxon>
        <taxon>Moraxellaceae</taxon>
        <taxon>Acinetobacter</taxon>
        <taxon>Acinetobacter calcoaceticus/baumannii complex</taxon>
    </lineage>
</organism>
<gene>
    <name type="ordered locus">AB57_3429</name>
</gene>
<feature type="chain" id="PRO_1000130588" description="Nucleotide-binding protein AB57_3429">
    <location>
        <begin position="1"/>
        <end position="162"/>
    </location>
</feature>
<reference key="1">
    <citation type="journal article" date="2008" name="J. Bacteriol.">
        <title>Comparative genome sequence analysis of multidrug-resistant Acinetobacter baumannii.</title>
        <authorList>
            <person name="Adams M.D."/>
            <person name="Goglin K."/>
            <person name="Molyneaux N."/>
            <person name="Hujer K.M."/>
            <person name="Lavender H."/>
            <person name="Jamison J.J."/>
            <person name="MacDonald I.J."/>
            <person name="Martin K.M."/>
            <person name="Russo T."/>
            <person name="Campagnari A.A."/>
            <person name="Hujer A.M."/>
            <person name="Bonomo R.A."/>
            <person name="Gill S.R."/>
        </authorList>
    </citation>
    <scope>NUCLEOTIDE SEQUENCE [LARGE SCALE GENOMIC DNA]</scope>
    <source>
        <strain>AB0057</strain>
    </source>
</reference>
<evidence type="ECO:0000255" key="1">
    <source>
        <dbReference type="HAMAP-Rule" id="MF_00632"/>
    </source>
</evidence>
<proteinExistence type="inferred from homology"/>
<sequence>MPSFDIVSELELFEVNHAVQNTQKEIATRFDFRGHDVSIELNEKNKEIKISTESDFQCEQVYNMLENHFYKRKIDVQALDPQKATASGKNFVQVIKLKDGLDSDTAKKINKAIKESGIKVQSSIQGDKIRVTDKKRDTLQQVMAFLREQQFGLPLQFNNFKD</sequence>
<dbReference type="EMBL" id="CP001182">
    <property type="protein sequence ID" value="ACJ41998.1"/>
    <property type="molecule type" value="Genomic_DNA"/>
</dbReference>
<dbReference type="RefSeq" id="WP_001138893.1">
    <property type="nucleotide sequence ID" value="NC_011586.2"/>
</dbReference>
<dbReference type="SMR" id="B7I989"/>
<dbReference type="KEGG" id="abn:AB57_3429"/>
<dbReference type="HOGENOM" id="CLU_099839_1_0_6"/>
<dbReference type="Proteomes" id="UP000007094">
    <property type="component" value="Chromosome"/>
</dbReference>
<dbReference type="GO" id="GO:0005829">
    <property type="term" value="C:cytosol"/>
    <property type="evidence" value="ECO:0007669"/>
    <property type="project" value="TreeGrafter"/>
</dbReference>
<dbReference type="GO" id="GO:0000166">
    <property type="term" value="F:nucleotide binding"/>
    <property type="evidence" value="ECO:0007669"/>
    <property type="project" value="TreeGrafter"/>
</dbReference>
<dbReference type="CDD" id="cd11740">
    <property type="entry name" value="YajQ_like"/>
    <property type="match status" value="1"/>
</dbReference>
<dbReference type="Gene3D" id="3.30.70.860">
    <property type="match status" value="1"/>
</dbReference>
<dbReference type="Gene3D" id="3.30.70.990">
    <property type="entry name" value="YajQ-like, domain 2"/>
    <property type="match status" value="1"/>
</dbReference>
<dbReference type="HAMAP" id="MF_00632">
    <property type="entry name" value="YajQ"/>
    <property type="match status" value="1"/>
</dbReference>
<dbReference type="InterPro" id="IPR007551">
    <property type="entry name" value="DUF520"/>
</dbReference>
<dbReference type="InterPro" id="IPR035571">
    <property type="entry name" value="UPF0234-like_C"/>
</dbReference>
<dbReference type="InterPro" id="IPR035570">
    <property type="entry name" value="UPF0234_N"/>
</dbReference>
<dbReference type="InterPro" id="IPR036183">
    <property type="entry name" value="YajQ-like_sf"/>
</dbReference>
<dbReference type="NCBIfam" id="NF003819">
    <property type="entry name" value="PRK05412.1"/>
    <property type="match status" value="1"/>
</dbReference>
<dbReference type="PANTHER" id="PTHR30476">
    <property type="entry name" value="UPF0234 PROTEIN YAJQ"/>
    <property type="match status" value="1"/>
</dbReference>
<dbReference type="PANTHER" id="PTHR30476:SF0">
    <property type="entry name" value="UPF0234 PROTEIN YAJQ"/>
    <property type="match status" value="1"/>
</dbReference>
<dbReference type="Pfam" id="PF04461">
    <property type="entry name" value="DUF520"/>
    <property type="match status" value="1"/>
</dbReference>
<dbReference type="SUPFAM" id="SSF89963">
    <property type="entry name" value="YajQ-like"/>
    <property type="match status" value="2"/>
</dbReference>
<comment type="function">
    <text evidence="1">Nucleotide-binding protein.</text>
</comment>
<comment type="similarity">
    <text evidence="1">Belongs to the YajQ family.</text>
</comment>
<keyword id="KW-0547">Nucleotide-binding</keyword>
<name>Y3429_ACIB5</name>